<sequence length="1023" mass="110194">MANSQLDRVKGLIDSLNQHTKSAAKSGAGALKNGLGQVKQAGQKLILYIPKDYQASTGSSLNDLVKAAEALGIEVHRSEKNGTALAKELFGTTEKLLGFSERGIALFAPQFDKLLNKNQKLSKSLGGSSEALGQRLNKTQTALSALQSFLGTAIAGMDLDSLLRRRRNGEDVSGSELAKAGVDLAAQLVDNIASATGTVDAFAEQLGKLAMPYLTLALSGLASKLNNLPDLSLAGPGFDAVSGILSVVSASFILSNKDADAGTKAAAGIEISTKILGNIGKAVSQYIIAQRVAAGLSTTAATGGLIGSVVALAISPLSFLNVADKFERAKQLEQYSERFKKFGYEGDSLLASFYRETGAIEAALTTINSVLSARSAGVGAAATGSLVGAPVAALVSAITGIISGILDASKQAIFERVATKLANKIDEWEKKHGKNYFENGYDARHSAFLEDTFELLSQYNKEYSVERVVAITQQRWDVNIGELAGITRKGSDTKSGKAYVDFFEEGKLLEKEPDRFDKKVFDPLEGKIDLSSINKTTLLKFVTPVFTAGEEIRERKQTGKYQYMTELFVKGKEKWVVTGVQSHNAIYDYTNLIQLAIDKKGEKRQVTIESHLGEKNDRIYLSSGSSIVYAGNGHDVAYYDKTDTGYLTFDGQSAQKAGEYIVTKELKADVKVLKEVVKTQDISVGKTCSEKLEYRDYELSPFELGNGIRAKDELHSVEEIIGSNRKDKFFGSRFTDIFHGAKGDDEIYGNDGHDILYGDDGNDVIHGGDGNDHLVGGNGNDRLIGGKGNNFLNGGDGDDELQVFEGQYNVLLGGAGNDILYGSDGTNLFDGGVGNDKIYGGLGKDIYRYSKEYGRHIIIEKGGDDDTLLLSDLSFKDVGFIRIGDDLLVNKRIGGTLYYHEDYNGNALTIKDWFKEGKEGQNNKIEKIVDKDGAYVLSQYLTELTAPGRGINYFNGLEEKLYYGEGYNALPQLRKDIEQIISSTGAFTGDHGKVSVGSGGPLVYNNSANNVANSLSYSLAQAA</sequence>
<gene>
    <name type="primary">apxIA</name>
    <name type="synonym">clyIA</name>
    <name type="synonym">hlyIA</name>
</gene>
<protein>
    <recommendedName>
        <fullName>RTX-I toxin determinant A from serotypes 1/9</fullName>
    </recommendedName>
    <alternativeName>
        <fullName>APX-IA</fullName>
    </alternativeName>
    <alternativeName>
        <fullName>ApxI</fullName>
    </alternativeName>
    <alternativeName>
        <fullName>Cytolysin IA</fullName>
        <shortName>CLY-IA</shortName>
    </alternativeName>
    <alternativeName>
        <fullName>Hemolysin IA</fullName>
        <shortName>HLY-IA</shortName>
    </alternativeName>
</protein>
<evidence type="ECO:0000250" key="1"/>
<evidence type="ECO:0000255" key="2"/>
<evidence type="ECO:0000305" key="3"/>
<organism>
    <name type="scientific">Actinobacillus pleuropneumoniae</name>
    <name type="common">Haemophilus pleuropneumoniae</name>
    <dbReference type="NCBI Taxonomy" id="715"/>
    <lineage>
        <taxon>Bacteria</taxon>
        <taxon>Pseudomonadati</taxon>
        <taxon>Pseudomonadota</taxon>
        <taxon>Gammaproteobacteria</taxon>
        <taxon>Pasteurellales</taxon>
        <taxon>Pasteurellaceae</taxon>
        <taxon>Actinobacillus</taxon>
    </lineage>
</organism>
<keyword id="KW-0106">Calcium</keyword>
<keyword id="KW-0204">Cytolysis</keyword>
<keyword id="KW-0354">Hemolysis</keyword>
<keyword id="KW-1032">Host cell membrane</keyword>
<keyword id="KW-1043">Host membrane</keyword>
<keyword id="KW-0449">Lipoprotein</keyword>
<keyword id="KW-0472">Membrane</keyword>
<keyword id="KW-0564">Palmitate</keyword>
<keyword id="KW-0677">Repeat</keyword>
<keyword id="KW-0964">Secreted</keyword>
<keyword id="KW-0800">Toxin</keyword>
<keyword id="KW-0812">Transmembrane</keyword>
<keyword id="KW-1133">Transmembrane helix</keyword>
<keyword id="KW-0843">Virulence</keyword>
<accession>P55128</accession>
<proteinExistence type="evidence at protein level"/>
<feature type="chain" id="PRO_0000196237" description="RTX-I toxin determinant A from serotypes 1/9">
    <location>
        <begin position="1"/>
        <end position="1023"/>
    </location>
</feature>
<feature type="transmembrane region" description="Helical" evidence="2">
    <location>
        <begin position="226"/>
        <end position="256"/>
    </location>
</feature>
<feature type="transmembrane region" description="Helical" evidence="2">
    <location>
        <begin position="297"/>
        <end position="326"/>
    </location>
</feature>
<feature type="transmembrane region" description="Helical" evidence="2">
    <location>
        <begin position="367"/>
        <end position="406"/>
    </location>
</feature>
<feature type="repeat" description="Hemolysin-type calcium-binding 1">
    <location>
        <begin position="730"/>
        <end position="747"/>
    </location>
</feature>
<feature type="repeat" description="Hemolysin-type calcium-binding 2">
    <location>
        <begin position="748"/>
        <end position="765"/>
    </location>
</feature>
<feature type="repeat" description="Hemolysin-type calcium-binding 3">
    <location>
        <begin position="766"/>
        <end position="783"/>
    </location>
</feature>
<feature type="repeat" description="Hemolysin-type calcium-binding 4">
    <location>
        <begin position="784"/>
        <end position="801"/>
    </location>
</feature>
<feature type="repeat" description="Hemolysin-type calcium-binding 5">
    <location>
        <begin position="812"/>
        <end position="829"/>
    </location>
</feature>
<feature type="repeat" description="Hemolysin-type calcium-binding 6">
    <location>
        <begin position="830"/>
        <end position="847"/>
    </location>
</feature>
<feature type="sequence conflict" description="In Ref. 3 and 4." evidence="3" ref="3 4">
    <original>AMPYLTLA</original>
    <variation>GNALSNTR</variation>
    <location>
        <begin position="210"/>
        <end position="217"/>
    </location>
</feature>
<feature type="sequence conflict" description="In Ref. 3 and 4." evidence="3" ref="3 4">
    <original>R</original>
    <variation>A</variation>
    <location>
        <position position="374"/>
    </location>
</feature>
<feature type="sequence conflict" description="In Ref. 3 and 4." evidence="3" ref="3 4">
    <original>Q</original>
    <variation>E</variation>
    <location>
        <position position="562"/>
    </location>
</feature>
<feature type="sequence conflict" description="In Ref. 3 and 4." evidence="3" ref="3 4">
    <original>TC</original>
    <variation>R</variation>
    <location>
        <begin position="687"/>
        <end position="688"/>
    </location>
</feature>
<reference key="1">
    <citation type="journal article" date="1991" name="Infect. Immun.">
        <title>Nucleotide sequence of the hemolysin I gene from Actinobacillus pleuropneumoniae.</title>
        <authorList>
            <person name="Frey J."/>
            <person name="Meier R."/>
            <person name="Gygi D."/>
            <person name="Nicolet J."/>
        </authorList>
    </citation>
    <scope>NUCLEOTIDE SEQUENCE [GENOMIC DNA]</scope>
    <source>
        <strain>ATCC 27088 / DSM 13472 / CCM 5869 / S4074 / Serotype 1</strain>
    </source>
</reference>
<reference key="2">
    <citation type="journal article" date="1994" name="Gene">
        <title>Sequence analysis and transcription of the apxI operon (hemolysin I) from Actinobacillus pleuropneumoniae.</title>
        <authorList>
            <person name="Frey J."/>
            <person name="Haldimann A."/>
            <person name="Nicolet J."/>
            <person name="Boffini A."/>
            <person name="Prentki P."/>
        </authorList>
    </citation>
    <scope>NUCLEOTIDE SEQUENCE [GENOMIC DNA]</scope>
    <source>
        <strain>ATCC 27088 / DSM 13472 / CCM 5869 / S4074 / Serotype 1</strain>
    </source>
</reference>
<reference key="3">
    <citation type="journal article" date="1993" name="Infect. Immun.">
        <title>Structural analysis of the Actinobacillus pleuropneumoniae-RTX-toxin I (ApxI) operon.</title>
        <authorList>
            <person name="Jansen R."/>
            <person name="Briaire J."/>
            <person name="Kamp E.M."/>
            <person name="Gielkens A.L.J."/>
            <person name="Smits M.A."/>
        </authorList>
    </citation>
    <scope>NUCLEOTIDE SEQUENCE [GENOMIC DNA]</scope>
    <source>
        <strain>Isolate CVI 13261 / Serotype 9</strain>
    </source>
</reference>
<reference key="4">
    <citation type="submission" date="1994-01" db="EMBL/GenBank/DDBJ databases">
        <authorList>
            <person name="Chang Y."/>
            <person name="Wang Y."/>
            <person name="Chin N."/>
        </authorList>
    </citation>
    <scope>NUCLEOTIDE SEQUENCE [GENOMIC DNA]</scope>
    <source>
        <strain>ATCC 27088 / DSM 13472 / CCM 5869 / S4074 / Serotype 1</strain>
    </source>
</reference>
<reference key="5">
    <citation type="journal article" date="1994" name="Mol. Microbiol.">
        <title>The RTX haemolysins ApxI and ApxII are major virulence factors of the swine pathogen Actinobacillus pleuropneumoniae: evidence from mutational analysis.</title>
        <authorList>
            <person name="Tascon R.I."/>
            <person name="Vazquez-Boland J.A."/>
            <person name="Gutierrez-Martin C.B."/>
            <person name="Rodriguez-Barbosa I."/>
            <person name="Rodriguez-Ferri E.F."/>
        </authorList>
    </citation>
    <scope>NUCLEOTIDE SEQUENCE [GENOMIC DNA] OF 604-685</scope>
    <scope>CHARACTERIZATION IN VIVO</scope>
    <source>
        <strain>CM5 / Serotype 1</strain>
    </source>
</reference>
<name>RTX11_ACTPL</name>
<dbReference type="EMBL" id="X52899">
    <property type="protein sequence ID" value="CAA37081.1"/>
    <property type="molecule type" value="Genomic_DNA"/>
</dbReference>
<dbReference type="EMBL" id="X68595">
    <property type="protein sequence ID" value="CAA48586.1"/>
    <property type="molecule type" value="Genomic_DNA"/>
</dbReference>
<dbReference type="EMBL" id="X73117">
    <property type="protein sequence ID" value="CAA51548.1"/>
    <property type="molecule type" value="Genomic_DNA"/>
</dbReference>
<dbReference type="EMBL" id="U05042">
    <property type="protein sequence ID" value="AAB05034.1"/>
    <property type="molecule type" value="Genomic_DNA"/>
</dbReference>
<dbReference type="PIR" id="I39643">
    <property type="entry name" value="I39643"/>
</dbReference>
<dbReference type="RefSeq" id="WP_005598583.1">
    <property type="nucleotide sequence ID" value="NZ_JBHLVK010000015.1"/>
</dbReference>
<dbReference type="SMR" id="P55128"/>
<dbReference type="GeneID" id="48599659"/>
<dbReference type="GO" id="GO:0005576">
    <property type="term" value="C:extracellular region"/>
    <property type="evidence" value="ECO:0007669"/>
    <property type="project" value="UniProtKB-SubCell"/>
</dbReference>
<dbReference type="GO" id="GO:0020002">
    <property type="term" value="C:host cell plasma membrane"/>
    <property type="evidence" value="ECO:0007669"/>
    <property type="project" value="UniProtKB-SubCell"/>
</dbReference>
<dbReference type="GO" id="GO:0016020">
    <property type="term" value="C:membrane"/>
    <property type="evidence" value="ECO:0007669"/>
    <property type="project" value="UniProtKB-KW"/>
</dbReference>
<dbReference type="GO" id="GO:0005509">
    <property type="term" value="F:calcium ion binding"/>
    <property type="evidence" value="ECO:0007669"/>
    <property type="project" value="InterPro"/>
</dbReference>
<dbReference type="GO" id="GO:0015267">
    <property type="term" value="F:channel activity"/>
    <property type="evidence" value="ECO:0007669"/>
    <property type="project" value="InterPro"/>
</dbReference>
<dbReference type="GO" id="GO:0090729">
    <property type="term" value="F:toxin activity"/>
    <property type="evidence" value="ECO:0007669"/>
    <property type="project" value="UniProtKB-KW"/>
</dbReference>
<dbReference type="GO" id="GO:0001897">
    <property type="term" value="P:symbiont-mediated cytolysis of host cell"/>
    <property type="evidence" value="ECO:0000269"/>
    <property type="project" value="SigSci"/>
</dbReference>
<dbReference type="FunFam" id="2.150.10.10:FF:000006">
    <property type="entry name" value="RTX-I toxin determinant A from serotypes 5/10"/>
    <property type="match status" value="1"/>
</dbReference>
<dbReference type="Gene3D" id="2.150.10.10">
    <property type="entry name" value="Serralysin-like metalloprotease, C-terminal"/>
    <property type="match status" value="3"/>
</dbReference>
<dbReference type="InterPro" id="IPR018511">
    <property type="entry name" value="Hemolysin-typ_Ca-bd_CS"/>
</dbReference>
<dbReference type="InterPro" id="IPR001343">
    <property type="entry name" value="Hemolysn_Ca-bd"/>
</dbReference>
<dbReference type="InterPro" id="IPR013550">
    <property type="entry name" value="RTX_C"/>
</dbReference>
<dbReference type="InterPro" id="IPR018504">
    <property type="entry name" value="RTX_pore_form"/>
</dbReference>
<dbReference type="InterPro" id="IPR050557">
    <property type="entry name" value="RTX_toxin/Mannuronan_C5-epim"/>
</dbReference>
<dbReference type="InterPro" id="IPR003995">
    <property type="entry name" value="RTX_toxin_determinant-A"/>
</dbReference>
<dbReference type="InterPro" id="IPR011049">
    <property type="entry name" value="Serralysin-like_metalloprot_C"/>
</dbReference>
<dbReference type="NCBIfam" id="NF033943">
    <property type="entry name" value="RTX_toxin"/>
    <property type="match status" value="1"/>
</dbReference>
<dbReference type="PANTHER" id="PTHR38340">
    <property type="entry name" value="S-LAYER PROTEIN"/>
    <property type="match status" value="1"/>
</dbReference>
<dbReference type="PANTHER" id="PTHR38340:SF1">
    <property type="entry name" value="S-LAYER PROTEIN"/>
    <property type="match status" value="1"/>
</dbReference>
<dbReference type="Pfam" id="PF00353">
    <property type="entry name" value="HemolysinCabind"/>
    <property type="match status" value="4"/>
</dbReference>
<dbReference type="Pfam" id="PF02382">
    <property type="entry name" value="RTX"/>
    <property type="match status" value="1"/>
</dbReference>
<dbReference type="Pfam" id="PF08339">
    <property type="entry name" value="RTX_C"/>
    <property type="match status" value="1"/>
</dbReference>
<dbReference type="PRINTS" id="PR00313">
    <property type="entry name" value="CABNDNGRPT"/>
</dbReference>
<dbReference type="PRINTS" id="PR01488">
    <property type="entry name" value="RTXTOXINA"/>
</dbReference>
<dbReference type="SUPFAM" id="SSF51120">
    <property type="entry name" value="beta-Roll"/>
    <property type="match status" value="1"/>
</dbReference>
<dbReference type="PROSITE" id="PS00330">
    <property type="entry name" value="HEMOLYSIN_CALCIUM"/>
    <property type="match status" value="2"/>
</dbReference>
<comment type="function">
    <text>One of the virulence factors of A.pleuropneumoniae, which has a strong hemolytic activity and is cytotoxic for alveolar macrophages and neutrophils.</text>
</comment>
<comment type="subcellular location">
    <subcellularLocation>
        <location>Secreted</location>
    </subcellularLocation>
    <subcellularLocation>
        <location evidence="3">Host cell membrane</location>
        <topology evidence="3">Multi-pass membrane protein</topology>
    </subcellularLocation>
</comment>
<comment type="domain">
    <text>The Gly-rich region is probably involved in binding calcium, which is required for target cell-binding or cytolytic activity.</text>
</comment>
<comment type="domain">
    <text evidence="1">The three transmembrane domains are believed to be involved in pore formation by the cytotoxin.</text>
</comment>
<comment type="PTM">
    <text evidence="1">Palmitoylated by ApxIC. The toxin only becomes active when modified (By similarity).</text>
</comment>
<comment type="miscellaneous">
    <text>ApxIA is partially deleted in serotypes 2, 4, 6, 7, 8, 12, and totally deleted in serotype 3.</text>
</comment>
<comment type="miscellaneous">
    <text>The sequence shown is that of serotype 1.</text>
</comment>
<comment type="miscellaneous">
    <text>In strain CM15 (serotype 1), disruption of this gene results in production of only RTX-II toxin, and a weak hemolytic activity in mice and pigs.</text>
</comment>
<comment type="similarity">
    <text evidence="3">Belongs to the RTX prokaryotic toxin (TC 1.C.11) family.</text>
</comment>